<accession>P58773</accession>
<accession>P02559</accession>
<accession>P08942</accession>
<accession>P18442</accession>
<accession>P49437</accession>
<feature type="chain" id="PRO_0000205626" description="Tropomyosin alpha-1 chain">
    <location>
        <begin position="1"/>
        <end position="284"/>
    </location>
</feature>
<feature type="region of interest" description="Disordered" evidence="5">
    <location>
        <begin position="1"/>
        <end position="38"/>
    </location>
</feature>
<feature type="coiled-coil region" evidence="1">
    <location>
        <begin position="1"/>
        <end position="284"/>
    </location>
</feature>
<feature type="compositionally biased region" description="Basic and acidic residues" evidence="5">
    <location>
        <begin position="12"/>
        <end position="38"/>
    </location>
</feature>
<feature type="splice variant" id="VSP_006592" description="In isoform 2." evidence="7">
    <original>ELVALQKKLKGTEDELDKYSESLKDAQEKLELADKKATD</original>
    <variation>DIVQLEKQLRVTEDSRDQVLEELHKSEDSLLSAEEIAAK</variation>
    <location>
        <begin position="42"/>
        <end position="80"/>
    </location>
</feature>
<feature type="splice variant" id="VSP_006593" description="In isoform 2 and isoform 3." evidence="6">
    <original>DELYAQKLKYKAISEELDHALNDMTSI</original>
    <variation>EKVAHAKEENLNMHQMLDQTLLELNNM</variation>
    <location>
        <begin position="258"/>
        <end position="284"/>
    </location>
</feature>
<dbReference type="EMBL" id="X16230">
    <property type="protein sequence ID" value="CAA34344.1"/>
    <property type="molecule type" value="Genomic_DNA"/>
</dbReference>
<dbReference type="EMBL" id="X16236">
    <property type="protein sequence ID" value="CAA34344.1"/>
    <property type="status" value="JOINED"/>
    <property type="molecule type" value="Genomic_DNA"/>
</dbReference>
<dbReference type="EMBL" id="X16237">
    <property type="protein sequence ID" value="CAA34344.1"/>
    <property type="status" value="JOINED"/>
    <property type="molecule type" value="Genomic_DNA"/>
</dbReference>
<dbReference type="EMBL" id="X16238">
    <property type="protein sequence ID" value="CAA34344.1"/>
    <property type="status" value="JOINED"/>
    <property type="molecule type" value="Genomic_DNA"/>
</dbReference>
<dbReference type="EMBL" id="X16239">
    <property type="protein sequence ID" value="CAA34344.1"/>
    <property type="status" value="JOINED"/>
    <property type="molecule type" value="Genomic_DNA"/>
</dbReference>
<dbReference type="EMBL" id="X16240">
    <property type="protein sequence ID" value="CAA34344.1"/>
    <property type="status" value="JOINED"/>
    <property type="molecule type" value="Genomic_DNA"/>
</dbReference>
<dbReference type="EMBL" id="X16230">
    <property type="protein sequence ID" value="CAA34343.1"/>
    <property type="molecule type" value="Genomic_DNA"/>
</dbReference>
<dbReference type="EMBL" id="X16236">
    <property type="protein sequence ID" value="CAA34343.1"/>
    <property type="status" value="JOINED"/>
    <property type="molecule type" value="Genomic_DNA"/>
</dbReference>
<dbReference type="EMBL" id="X16237">
    <property type="protein sequence ID" value="CAA34343.1"/>
    <property type="status" value="JOINED"/>
    <property type="molecule type" value="Genomic_DNA"/>
</dbReference>
<dbReference type="EMBL" id="X16238">
    <property type="protein sequence ID" value="CAA34343.1"/>
    <property type="status" value="JOINED"/>
    <property type="molecule type" value="Genomic_DNA"/>
</dbReference>
<dbReference type="EMBL" id="X16241">
    <property type="protein sequence ID" value="CAA34343.1"/>
    <property type="status" value="JOINED"/>
    <property type="molecule type" value="Genomic_DNA"/>
</dbReference>
<dbReference type="EMBL" id="X04690">
    <property type="protein sequence ID" value="CAA28393.1"/>
    <property type="molecule type" value="mRNA"/>
</dbReference>
<dbReference type="EMBL" id="M15043">
    <property type="protein sequence ID" value="AAA49511.1"/>
    <property type="molecule type" value="mRNA"/>
</dbReference>
<dbReference type="EMBL" id="M17914">
    <property type="protein sequence ID" value="AAA49510.1"/>
    <property type="molecule type" value="mRNA"/>
</dbReference>
<dbReference type="EMBL" id="M15044">
    <property type="protein sequence ID" value="AAA49508.1"/>
    <property type="molecule type" value="mRNA"/>
</dbReference>
<dbReference type="PIR" id="A28499">
    <property type="entry name" value="A28499"/>
</dbReference>
<dbReference type="PIR" id="B28499">
    <property type="entry name" value="A26113"/>
</dbReference>
<dbReference type="PIR" id="S05445">
    <property type="entry name" value="S05445"/>
</dbReference>
<dbReference type="SMR" id="P58773"/>
<dbReference type="Proteomes" id="UP000694412">
    <property type="component" value="Unplaced"/>
</dbReference>
<dbReference type="GO" id="GO:0015629">
    <property type="term" value="C:actin cytoskeleton"/>
    <property type="evidence" value="ECO:0000250"/>
    <property type="project" value="UniProtKB"/>
</dbReference>
<dbReference type="GO" id="GO:0005737">
    <property type="term" value="C:cytoplasm"/>
    <property type="evidence" value="ECO:0007669"/>
    <property type="project" value="UniProtKB-KW"/>
</dbReference>
<dbReference type="GO" id="GO:0051015">
    <property type="term" value="F:actin filament binding"/>
    <property type="evidence" value="ECO:0000250"/>
    <property type="project" value="UniProtKB"/>
</dbReference>
<dbReference type="GO" id="GO:0042802">
    <property type="term" value="F:identical protein binding"/>
    <property type="evidence" value="ECO:0000250"/>
    <property type="project" value="UniProtKB"/>
</dbReference>
<dbReference type="GO" id="GO:0046982">
    <property type="term" value="F:protein heterodimerization activity"/>
    <property type="evidence" value="ECO:0000250"/>
    <property type="project" value="UniProtKB"/>
</dbReference>
<dbReference type="GO" id="GO:0042803">
    <property type="term" value="F:protein homodimerization activity"/>
    <property type="evidence" value="ECO:0000250"/>
    <property type="project" value="UniProtKB"/>
</dbReference>
<dbReference type="FunFam" id="1.20.5.1160:FF:000013">
    <property type="entry name" value="Tropomyosin 1 (alpha)"/>
    <property type="match status" value="1"/>
</dbReference>
<dbReference type="FunFam" id="1.20.5.170:FF:000005">
    <property type="entry name" value="Tropomyosin alpha-1 chain"/>
    <property type="match status" value="1"/>
</dbReference>
<dbReference type="FunFam" id="1.20.5.170:FF:000001">
    <property type="entry name" value="Tropomyosin alpha-1 chain isoform 1"/>
    <property type="match status" value="1"/>
</dbReference>
<dbReference type="FunFam" id="1.20.5.340:FF:000001">
    <property type="entry name" value="Tropomyosin alpha-1 chain isoform 2"/>
    <property type="match status" value="1"/>
</dbReference>
<dbReference type="Gene3D" id="1.20.5.170">
    <property type="match status" value="2"/>
</dbReference>
<dbReference type="Gene3D" id="1.20.5.340">
    <property type="match status" value="1"/>
</dbReference>
<dbReference type="InterPro" id="IPR000533">
    <property type="entry name" value="Tropomyosin"/>
</dbReference>
<dbReference type="PANTHER" id="PTHR19269">
    <property type="entry name" value="TROPOMYOSIN"/>
    <property type="match status" value="1"/>
</dbReference>
<dbReference type="Pfam" id="PF00261">
    <property type="entry name" value="Tropomyosin"/>
    <property type="match status" value="1"/>
</dbReference>
<dbReference type="PRINTS" id="PR00194">
    <property type="entry name" value="TROPOMYOSIN"/>
</dbReference>
<dbReference type="SUPFAM" id="SSF57997">
    <property type="entry name" value="Tropomyosin"/>
    <property type="match status" value="1"/>
</dbReference>
<dbReference type="PROSITE" id="PS00326">
    <property type="entry name" value="TROPOMYOSIN"/>
    <property type="match status" value="1"/>
</dbReference>
<proteinExistence type="evidence at transcript level"/>
<name>TPM1_COTJA</name>
<comment type="function">
    <text evidence="4">Binds to actin filaments in muscle and non-muscle cells. Plays a central role, in association with the troponin complex, in the calcium dependent regulation of vertebrate striated muscle contraction. Smooth muscle contraction is regulated by interaction with caldesmon. In non-muscle cells is implicated in stabilizing cytoskeleton actin filaments.</text>
</comment>
<comment type="subunit">
    <text evidence="2 3">Homodimer. Heterodimer of an alpha (TPM1, TPM3 or TPM4) and a beta (TPM2) chain. Interacts with HRG (via the HRR domain); the interaction contributes to the antiangiogenic properties of the histidine/proline-rich region (HRR) of HRG.</text>
</comment>
<comment type="subcellular location">
    <subcellularLocation>
        <location evidence="3">Cytoplasm</location>
        <location evidence="3">Cytoskeleton</location>
    </subcellularLocation>
    <text evidence="3">Associates with F-actin stress fibers.</text>
</comment>
<comment type="alternative products">
    <event type="alternative splicing"/>
    <isoform>
        <id>P58773-1</id>
        <name>1</name>
        <name>Skeletal muscle</name>
        <name>cC402</name>
        <name>SK74</name>
        <sequence type="displayed"/>
    </isoform>
    <isoform>
        <id>P58773-2</id>
        <name>2</name>
        <name>Smooth muscle</name>
        <sequence type="described" ref="VSP_006592 VSP_006593"/>
    </isoform>
    <isoform>
        <id>P58773-3</id>
        <name>3</name>
        <name>Fibroblast</name>
        <name>cC401</name>
        <sequence type="described" ref="VSP_006593"/>
    </isoform>
    <text>Additional isoforms seem to exist.</text>
</comment>
<comment type="domain">
    <text>The molecule is in a coiled coil structure that is formed by 2 polypeptide chains. The sequence exhibits a prominent seven-residues periodicity.</text>
</comment>
<comment type="similarity">
    <text evidence="7">Belongs to the tropomyosin family.</text>
</comment>
<keyword id="KW-0009">Actin-binding</keyword>
<keyword id="KW-0025">Alternative splicing</keyword>
<keyword id="KW-0175">Coiled coil</keyword>
<keyword id="KW-0963">Cytoplasm</keyword>
<keyword id="KW-0206">Cytoskeleton</keyword>
<keyword id="KW-0514">Muscle protein</keyword>
<keyword id="KW-1185">Reference proteome</keyword>
<protein>
    <recommendedName>
        <fullName>Tropomyosin alpha-1 chain</fullName>
    </recommendedName>
    <alternativeName>
        <fullName>Alpha-tropomyosin</fullName>
    </alternativeName>
    <alternativeName>
        <fullName>Tropomyosin-1</fullName>
    </alternativeName>
</protein>
<evidence type="ECO:0000250" key="1"/>
<evidence type="ECO:0000250" key="2">
    <source>
        <dbReference type="UniProtKB" id="P04268"/>
    </source>
</evidence>
<evidence type="ECO:0000250" key="3">
    <source>
        <dbReference type="UniProtKB" id="P04692"/>
    </source>
</evidence>
<evidence type="ECO:0000250" key="4">
    <source>
        <dbReference type="UniProtKB" id="P09493"/>
    </source>
</evidence>
<evidence type="ECO:0000256" key="5">
    <source>
        <dbReference type="SAM" id="MobiDB-lite"/>
    </source>
</evidence>
<evidence type="ECO:0000303" key="6">
    <source>
    </source>
</evidence>
<evidence type="ECO:0000305" key="7"/>
<reference key="1">
    <citation type="journal article" date="1989" name="Nucleic Acids Res.">
        <title>Avian tropomyosin gene expression.</title>
        <authorList>
            <person name="Lindquester G.J."/>
            <person name="Flach J.E."/>
            <person name="Fleenor D.E."/>
            <person name="Hickman K.H."/>
            <person name="Devlin R.B."/>
        </authorList>
    </citation>
    <scope>NUCLEOTIDE SEQUENCE [GENOMIC DNA] (ISOFORMS 1 AND 2)</scope>
</reference>
<reference key="2">
    <citation type="journal article" date="1987" name="J. Biol. Chem.">
        <title>A novel hybrid alpha-tropomyosin in fibroblasts is produced by alternative splicing of transcripts from the skeletal muscle alpha-tropomyosin gene.</title>
        <authorList>
            <person name="Pearson-White S.H."/>
            <person name="Emerson C.P. Jr."/>
        </authorList>
    </citation>
    <scope>NUCLEOTIDE SEQUENCE [MRNA] (ISOFORMS 1 AND 3)</scope>
</reference>
<reference key="3">
    <citation type="journal article" date="1986" name="Nucleic Acids Res.">
        <title>Analysis of tropomyosin cDNAs isolated from skeletal and smooth muscle mRNA.</title>
        <authorList>
            <person name="Flach J.E."/>
            <person name="Lindquester G.J."/>
            <person name="Berish S."/>
            <person name="Hickman K.H."/>
            <person name="Devlin R."/>
        </authorList>
    </citation>
    <scope>NUCLEOTIDE SEQUENCE [MRNA] (ISOFORM 1)</scope>
</reference>
<reference key="4">
    <citation type="journal article" date="1987" name="J. Biol. Chem.">
        <title>Closely related alpha-tropomyosin mRNAs in quail fibroblasts and skeletal muscle cells.</title>
        <authorList>
            <person name="Hallauer P.L."/>
            <person name="Hastings K.E.M."/>
            <person name="Baldwin A.S. Jr."/>
            <person name="Pearson-White S.H."/>
            <person name="Merrifield P.A."/>
            <person name="Emerson C.P. Jr."/>
        </authorList>
    </citation>
    <scope>PARTIAL NUCLEOTIDE SEQUENCE [MRNA] (ISOFORMS 1 AND 3)</scope>
</reference>
<gene>
    <name type="primary">TPM1</name>
</gene>
<organism>
    <name type="scientific">Coturnix japonica</name>
    <name type="common">Japanese quail</name>
    <name type="synonym">Coturnix coturnix japonica</name>
    <dbReference type="NCBI Taxonomy" id="93934"/>
    <lineage>
        <taxon>Eukaryota</taxon>
        <taxon>Metazoa</taxon>
        <taxon>Chordata</taxon>
        <taxon>Craniata</taxon>
        <taxon>Vertebrata</taxon>
        <taxon>Euteleostomi</taxon>
        <taxon>Archelosauria</taxon>
        <taxon>Archosauria</taxon>
        <taxon>Dinosauria</taxon>
        <taxon>Saurischia</taxon>
        <taxon>Theropoda</taxon>
        <taxon>Coelurosauria</taxon>
        <taxon>Aves</taxon>
        <taxon>Neognathae</taxon>
        <taxon>Galloanserae</taxon>
        <taxon>Galliformes</taxon>
        <taxon>Phasianidae</taxon>
        <taxon>Perdicinae</taxon>
        <taxon>Coturnix</taxon>
    </lineage>
</organism>
<sequence length="284" mass="32766">MDAIKKKMQMLKLDKENALDRAEQAEADKKAAEERSKQLEDELVALQKKLKGTEDELDKYSESLKDAQEKLELADKKATDAESEVASLNRRIQLVEEELDRAQERLATALQKLEEAEKAADESERGMKVIENRAQKDEEKMEIQEIQLKEAKHIAEEADRKYEEVARKLVIIEGDLERAEERAELSESKCAELEEELKTVTNNLKSLEAQAEKYSQKEDKYEEEIKVLTDKLKEAETRAEFAERSVTKLEKSIDDLEDELYAQKLKYKAISEELDHALNDMTSI</sequence>